<reference evidence="6 10" key="1">
    <citation type="journal article" date="2001" name="Biosci. Rep.">
        <title>Mouse beta-mannosidase, cDNA cloning, expression, and chromosomal localization.</title>
        <authorList>
            <person name="Beccari T."/>
            <person name="Bibi L."/>
            <person name="Stinchi S."/>
            <person name="Stirling J.L."/>
            <person name="Orlacchio A."/>
        </authorList>
    </citation>
    <scope>NUCLEOTIDE SEQUENCE [MRNA]</scope>
    <scope>TISSUE SPECIFICITY</scope>
    <source>
        <strain evidence="10">C57BL/6J</strain>
        <tissue evidence="2">Spleen</tissue>
    </source>
</reference>
<reference evidence="11" key="2">
    <citation type="journal article" date="2005" name="Science">
        <title>The transcriptional landscape of the mammalian genome.</title>
        <authorList>
            <person name="Carninci P."/>
            <person name="Kasukawa T."/>
            <person name="Katayama S."/>
            <person name="Gough J."/>
            <person name="Frith M.C."/>
            <person name="Maeda N."/>
            <person name="Oyama R."/>
            <person name="Ravasi T."/>
            <person name="Lenhard B."/>
            <person name="Wells C."/>
            <person name="Kodzius R."/>
            <person name="Shimokawa K."/>
            <person name="Bajic V.B."/>
            <person name="Brenner S.E."/>
            <person name="Batalov S."/>
            <person name="Forrest A.R."/>
            <person name="Zavolan M."/>
            <person name="Davis M.J."/>
            <person name="Wilming L.G."/>
            <person name="Aidinis V."/>
            <person name="Allen J.E."/>
            <person name="Ambesi-Impiombato A."/>
            <person name="Apweiler R."/>
            <person name="Aturaliya R.N."/>
            <person name="Bailey T.L."/>
            <person name="Bansal M."/>
            <person name="Baxter L."/>
            <person name="Beisel K.W."/>
            <person name="Bersano T."/>
            <person name="Bono H."/>
            <person name="Chalk A.M."/>
            <person name="Chiu K.P."/>
            <person name="Choudhary V."/>
            <person name="Christoffels A."/>
            <person name="Clutterbuck D.R."/>
            <person name="Crowe M.L."/>
            <person name="Dalla E."/>
            <person name="Dalrymple B.P."/>
            <person name="de Bono B."/>
            <person name="Della Gatta G."/>
            <person name="di Bernardo D."/>
            <person name="Down T."/>
            <person name="Engstrom P."/>
            <person name="Fagiolini M."/>
            <person name="Faulkner G."/>
            <person name="Fletcher C.F."/>
            <person name="Fukushima T."/>
            <person name="Furuno M."/>
            <person name="Futaki S."/>
            <person name="Gariboldi M."/>
            <person name="Georgii-Hemming P."/>
            <person name="Gingeras T.R."/>
            <person name="Gojobori T."/>
            <person name="Green R.E."/>
            <person name="Gustincich S."/>
            <person name="Harbers M."/>
            <person name="Hayashi Y."/>
            <person name="Hensch T.K."/>
            <person name="Hirokawa N."/>
            <person name="Hill D."/>
            <person name="Huminiecki L."/>
            <person name="Iacono M."/>
            <person name="Ikeo K."/>
            <person name="Iwama A."/>
            <person name="Ishikawa T."/>
            <person name="Jakt M."/>
            <person name="Kanapin A."/>
            <person name="Katoh M."/>
            <person name="Kawasawa Y."/>
            <person name="Kelso J."/>
            <person name="Kitamura H."/>
            <person name="Kitano H."/>
            <person name="Kollias G."/>
            <person name="Krishnan S.P."/>
            <person name="Kruger A."/>
            <person name="Kummerfeld S.K."/>
            <person name="Kurochkin I.V."/>
            <person name="Lareau L.F."/>
            <person name="Lazarevic D."/>
            <person name="Lipovich L."/>
            <person name="Liu J."/>
            <person name="Liuni S."/>
            <person name="McWilliam S."/>
            <person name="Madan Babu M."/>
            <person name="Madera M."/>
            <person name="Marchionni L."/>
            <person name="Matsuda H."/>
            <person name="Matsuzawa S."/>
            <person name="Miki H."/>
            <person name="Mignone F."/>
            <person name="Miyake S."/>
            <person name="Morris K."/>
            <person name="Mottagui-Tabar S."/>
            <person name="Mulder N."/>
            <person name="Nakano N."/>
            <person name="Nakauchi H."/>
            <person name="Ng P."/>
            <person name="Nilsson R."/>
            <person name="Nishiguchi S."/>
            <person name="Nishikawa S."/>
            <person name="Nori F."/>
            <person name="Ohara O."/>
            <person name="Okazaki Y."/>
            <person name="Orlando V."/>
            <person name="Pang K.C."/>
            <person name="Pavan W.J."/>
            <person name="Pavesi G."/>
            <person name="Pesole G."/>
            <person name="Petrovsky N."/>
            <person name="Piazza S."/>
            <person name="Reed J."/>
            <person name="Reid J.F."/>
            <person name="Ring B.Z."/>
            <person name="Ringwald M."/>
            <person name="Rost B."/>
            <person name="Ruan Y."/>
            <person name="Salzberg S.L."/>
            <person name="Sandelin A."/>
            <person name="Schneider C."/>
            <person name="Schoenbach C."/>
            <person name="Sekiguchi K."/>
            <person name="Semple C.A."/>
            <person name="Seno S."/>
            <person name="Sessa L."/>
            <person name="Sheng Y."/>
            <person name="Shibata Y."/>
            <person name="Shimada H."/>
            <person name="Shimada K."/>
            <person name="Silva D."/>
            <person name="Sinclair B."/>
            <person name="Sperling S."/>
            <person name="Stupka E."/>
            <person name="Sugiura K."/>
            <person name="Sultana R."/>
            <person name="Takenaka Y."/>
            <person name="Taki K."/>
            <person name="Tammoja K."/>
            <person name="Tan S.L."/>
            <person name="Tang S."/>
            <person name="Taylor M.S."/>
            <person name="Tegner J."/>
            <person name="Teichmann S.A."/>
            <person name="Ueda H.R."/>
            <person name="van Nimwegen E."/>
            <person name="Verardo R."/>
            <person name="Wei C.L."/>
            <person name="Yagi K."/>
            <person name="Yamanishi H."/>
            <person name="Zabarovsky E."/>
            <person name="Zhu S."/>
            <person name="Zimmer A."/>
            <person name="Hide W."/>
            <person name="Bult C."/>
            <person name="Grimmond S.M."/>
            <person name="Teasdale R.D."/>
            <person name="Liu E.T."/>
            <person name="Brusic V."/>
            <person name="Quackenbush J."/>
            <person name="Wahlestedt C."/>
            <person name="Mattick J.S."/>
            <person name="Hume D.A."/>
            <person name="Kai C."/>
            <person name="Sasaki D."/>
            <person name="Tomaru Y."/>
            <person name="Fukuda S."/>
            <person name="Kanamori-Katayama M."/>
            <person name="Suzuki M."/>
            <person name="Aoki J."/>
            <person name="Arakawa T."/>
            <person name="Iida J."/>
            <person name="Imamura K."/>
            <person name="Itoh M."/>
            <person name="Kato T."/>
            <person name="Kawaji H."/>
            <person name="Kawagashira N."/>
            <person name="Kawashima T."/>
            <person name="Kojima M."/>
            <person name="Kondo S."/>
            <person name="Konno H."/>
            <person name="Nakano K."/>
            <person name="Ninomiya N."/>
            <person name="Nishio T."/>
            <person name="Okada M."/>
            <person name="Plessy C."/>
            <person name="Shibata K."/>
            <person name="Shiraki T."/>
            <person name="Suzuki S."/>
            <person name="Tagami M."/>
            <person name="Waki K."/>
            <person name="Watahiki A."/>
            <person name="Okamura-Oho Y."/>
            <person name="Suzuki H."/>
            <person name="Kawai J."/>
            <person name="Hayashizaki Y."/>
        </authorList>
    </citation>
    <scope>NUCLEOTIDE SEQUENCE [LARGE SCALE MRNA]</scope>
    <source>
        <strain evidence="11">C57BL/6J</strain>
        <strain evidence="14">NOD</strain>
        <tissue>Dendritic cell</tissue>
        <tissue evidence="12">Embryonic heart</tissue>
        <tissue>Embryonic stem cell</tissue>
        <tissue evidence="13">Mammary gland</tissue>
    </source>
</reference>
<reference evidence="9" key="3">
    <citation type="journal article" date="2004" name="Genome Res.">
        <title>The status, quality, and expansion of the NIH full-length cDNA project: the Mammalian Gene Collection (MGC).</title>
        <authorList>
            <consortium name="The MGC Project Team"/>
        </authorList>
    </citation>
    <scope>NUCLEOTIDE SEQUENCE [LARGE SCALE MRNA]</scope>
    <source>
        <strain evidence="9">FVB/N</strain>
        <tissue evidence="9">Mammary gland</tissue>
    </source>
</reference>
<reference evidence="6" key="4">
    <citation type="journal article" date="2006" name="Hum. Mol. Genet.">
        <title>Beta-mannosidosis mice: a model for the human lysosomal storage disease.</title>
        <authorList>
            <person name="Zhu M."/>
            <person name="Lovell K.L."/>
            <person name="Patterson J.S."/>
            <person name="Saunders T.L."/>
            <person name="Hughes E.D."/>
            <person name="Friderici K.H."/>
        </authorList>
    </citation>
    <scope>FUNCTION</scope>
    <scope>CATALYTIC ACTIVITY</scope>
    <scope>PATHWAY</scope>
    <scope>SUBCELLULAR LOCATION</scope>
    <scope>TISSUE SPECIFICITY</scope>
    <scope>DISRUPTION PHENOTYPE</scope>
</reference>
<reference key="5">
    <citation type="journal article" date="2010" name="Cell">
        <title>A tissue-specific atlas of mouse protein phosphorylation and expression.</title>
        <authorList>
            <person name="Huttlin E.L."/>
            <person name="Jedrychowski M.P."/>
            <person name="Elias J.E."/>
            <person name="Goswami T."/>
            <person name="Rad R."/>
            <person name="Beausoleil S.A."/>
            <person name="Villen J."/>
            <person name="Haas W."/>
            <person name="Sowa M.E."/>
            <person name="Gygi S.P."/>
        </authorList>
    </citation>
    <scope>IDENTIFICATION BY MASS SPECTROMETRY [LARGE SCALE ANALYSIS]</scope>
    <source>
        <tissue>Brain</tissue>
        <tissue>Brown adipose tissue</tissue>
        <tissue>Heart</tissue>
        <tissue>Kidney</tissue>
        <tissue>Liver</tissue>
        <tissue>Lung</tissue>
        <tissue>Pancreas</tissue>
    </source>
</reference>
<reference key="6">
    <citation type="journal article" date="2019" name="FEBS J.">
        <title>The structure of mammalian beta-mannosidase provides insight into beta-mannosidosis and nystagmus.</title>
        <authorList>
            <person name="Gytz H."/>
            <person name="Liang J."/>
            <person name="Liang Y."/>
            <person name="Gorelik A."/>
            <person name="Illes K."/>
            <person name="Nagar B."/>
        </authorList>
    </citation>
    <scope>X-RAY CRYSTALLOGRAPHY (2.10 ANGSTROMS) OF 22-879 OF APOPROTEIN AND IN COMPLEX WITH MANNOSE</scope>
    <scope>CATALYTIC ACTIVITY</scope>
    <scope>SUBUNIT</scope>
    <scope>BIOPHYSICOCHEMICAL PROPERTIES</scope>
    <scope>GLYCOSYLATION AT ASN-35; ASN-77; ASN-89; ASN-113; ASN-226; ASN-297; ASN-302; ASN-736 AND ASN-803</scope>
    <scope>DISULFIDE BOND</scope>
</reference>
<protein>
    <recommendedName>
        <fullName>Beta-mannosidase</fullName>
        <ecNumber evidence="3 8">3.2.1.25</ecNumber>
    </recommendedName>
    <alternativeName>
        <fullName>Lysosomal beta A mannosidase</fullName>
    </alternativeName>
    <alternativeName>
        <fullName>Mannanase</fullName>
        <shortName>Mannase</shortName>
    </alternativeName>
</protein>
<evidence type="ECO:0000255" key="1"/>
<evidence type="ECO:0000269" key="2">
    <source>
    </source>
</evidence>
<evidence type="ECO:0000269" key="3">
    <source>
    </source>
</evidence>
<evidence type="ECO:0000269" key="4">
    <source>
    </source>
</evidence>
<evidence type="ECO:0000303" key="5">
    <source>
    </source>
</evidence>
<evidence type="ECO:0000305" key="6"/>
<evidence type="ECO:0000305" key="7">
    <source>
    </source>
</evidence>
<evidence type="ECO:0000305" key="8">
    <source>
    </source>
</evidence>
<evidence type="ECO:0000312" key="9">
    <source>
        <dbReference type="EMBL" id="AAH31409.1"/>
    </source>
</evidence>
<evidence type="ECO:0000312" key="10">
    <source>
        <dbReference type="EMBL" id="AAK18177.1"/>
    </source>
</evidence>
<evidence type="ECO:0000312" key="11">
    <source>
        <dbReference type="EMBL" id="BAB27069.1"/>
    </source>
</evidence>
<evidence type="ECO:0000312" key="12">
    <source>
        <dbReference type="EMBL" id="BAE24954.1"/>
    </source>
</evidence>
<evidence type="ECO:0000312" key="13">
    <source>
        <dbReference type="EMBL" id="BAE38715.1"/>
    </source>
</evidence>
<evidence type="ECO:0000312" key="14">
    <source>
        <dbReference type="EMBL" id="BAE41690.1"/>
    </source>
</evidence>
<evidence type="ECO:0000312" key="15">
    <source>
        <dbReference type="MGI" id="MGI:88175"/>
    </source>
</evidence>
<evidence type="ECO:0007744" key="16">
    <source>
        <dbReference type="PDB" id="6DDT"/>
    </source>
</evidence>
<evidence type="ECO:0007744" key="17">
    <source>
        <dbReference type="PDB" id="6DDU"/>
    </source>
</evidence>
<evidence type="ECO:0007829" key="18">
    <source>
        <dbReference type="PDB" id="6DDT"/>
    </source>
</evidence>
<evidence type="ECO:0007829" key="19">
    <source>
        <dbReference type="PDB" id="6DDU"/>
    </source>
</evidence>
<feature type="signal peptide" evidence="1">
    <location>
        <begin position="1"/>
        <end position="19"/>
    </location>
</feature>
<feature type="chain" id="PRO_0000250613" description="Beta-mannosidase" evidence="1">
    <location>
        <begin position="20"/>
        <end position="879"/>
    </location>
</feature>
<feature type="active site" description="Proton donor" evidence="8">
    <location>
        <position position="457"/>
    </location>
</feature>
<feature type="active site" description="Nucleophile" evidence="8">
    <location>
        <position position="554"/>
    </location>
</feature>
<feature type="binding site" evidence="4 17">
    <location>
        <begin position="190"/>
        <end position="192"/>
    </location>
    <ligand>
        <name>substrate</name>
    </ligand>
</feature>
<feature type="binding site" evidence="4 17">
    <location>
        <position position="456"/>
    </location>
    <ligand>
        <name>substrate</name>
    </ligand>
</feature>
<feature type="glycosylation site" description="N-linked (GlcNAc...) asparagine" evidence="4 16">
    <location>
        <position position="35"/>
    </location>
</feature>
<feature type="glycosylation site" description="N-linked (GlcNAc...) asparagine" evidence="4 16">
    <location>
        <position position="77"/>
    </location>
</feature>
<feature type="glycosylation site" description="N-linked (GlcNAc...) asparagine" evidence="4 16">
    <location>
        <position position="89"/>
    </location>
</feature>
<feature type="glycosylation site" description="N-linked (GlcNAc...) asparagine" evidence="4 16">
    <location>
        <position position="113"/>
    </location>
</feature>
<feature type="glycosylation site" description="N-linked (GlcNAc...) asparagine" evidence="4 16">
    <location>
        <position position="226"/>
    </location>
</feature>
<feature type="glycosylation site" description="N-linked (GlcNAc...) asparagine" evidence="4 16">
    <location>
        <position position="297"/>
    </location>
</feature>
<feature type="glycosylation site" description="N-linked (GlcNAc...) asparagine" evidence="4 16">
    <location>
        <position position="302"/>
    </location>
</feature>
<feature type="glycosylation site" description="N-linked (GlcNAc...) asparagine" evidence="4 16">
    <location>
        <position position="736"/>
    </location>
</feature>
<feature type="glycosylation site" description="N-linked (GlcNAc...) asparagine" evidence="4 16">
    <location>
        <position position="803"/>
    </location>
</feature>
<feature type="glycosylation site" description="N-linked (GlcNAc...) asparagine" evidence="1">
    <location>
        <position position="807"/>
    </location>
</feature>
<feature type="disulfide bond" evidence="4 16">
    <location>
        <begin position="167"/>
        <end position="176"/>
    </location>
</feature>
<feature type="disulfide bond" evidence="4 16">
    <location>
        <begin position="540"/>
        <end position="629"/>
    </location>
</feature>
<feature type="disulfide bond" evidence="4 16">
    <location>
        <begin position="732"/>
        <end position="761"/>
    </location>
</feature>
<feature type="disulfide bond" evidence="4 16">
    <location>
        <begin position="764"/>
        <end position="769"/>
    </location>
</feature>
<feature type="sequence conflict" description="In Ref. 1; AAK18177 and 2; BAE24954/BAE38715." evidence="6" ref="1 2">
    <original>I</original>
    <variation>V</variation>
    <location>
        <position position="130"/>
    </location>
</feature>
<feature type="sequence conflict" description="In Ref. 2; BAE38715." evidence="6" ref="2">
    <original>QFR</original>
    <variation>RFW</variation>
    <location>
        <begin position="143"/>
        <end position="145"/>
    </location>
</feature>
<feature type="sequence conflict" description="In Ref. 2; BAE38715." evidence="6" ref="2">
    <original>C</original>
    <variation>R</variation>
    <location>
        <position position="153"/>
    </location>
</feature>
<feature type="sequence conflict" description="In Ref. 2; BAE38715." evidence="6" ref="2">
    <original>SYR</original>
    <variation>RYP</variation>
    <location>
        <begin position="160"/>
        <end position="162"/>
    </location>
</feature>
<feature type="sequence conflict" description="In Ref. 1; AAK18177 and 2; BAE24954/BAE38715/BAE41690." evidence="6" ref="1 2">
    <original>K</original>
    <variation>E</variation>
    <location>
        <position position="236"/>
    </location>
</feature>
<feature type="sequence conflict" description="In Ref. 1; AAK18177 and 2; BAE24954." evidence="6" ref="1 2">
    <original>G</original>
    <variation>S</variation>
    <location>
        <position position="248"/>
    </location>
</feature>
<feature type="sequence conflict" description="In Ref. 2; BAE38715." evidence="6" ref="2">
    <original>N</original>
    <variation>H</variation>
    <location>
        <position position="264"/>
    </location>
</feature>
<feature type="sequence conflict" description="In Ref. 2; BAE24954." evidence="6" ref="2">
    <original>F</original>
    <variation>L</variation>
    <location>
        <position position="376"/>
    </location>
</feature>
<feature type="sequence conflict" description="In Ref. 2; BAE38715." evidence="6" ref="2">
    <original>K</original>
    <variation>N</variation>
    <location>
        <position position="491"/>
    </location>
</feature>
<feature type="sequence conflict" description="In Ref. 2; BAE38715." evidence="6" ref="2">
    <original>M</original>
    <variation>I</variation>
    <location>
        <position position="511"/>
    </location>
</feature>
<feature type="sequence conflict" description="In Ref. 2; BAE38715." evidence="6" ref="2">
    <original>H</original>
    <variation>Y</variation>
    <location>
        <position position="714"/>
    </location>
</feature>
<feature type="sequence conflict" description="In Ref. 2; BAE38715." evidence="6" ref="2">
    <original>G</original>
    <variation>R</variation>
    <location>
        <position position="744"/>
    </location>
</feature>
<feature type="sequence conflict" description="In Ref. 2; BAE38715." evidence="6" ref="2">
    <original>S</original>
    <variation>G</variation>
    <location>
        <position position="834"/>
    </location>
</feature>
<feature type="sequence conflict" description="In Ref. 2; BAE38715." evidence="6" ref="2">
    <original>R</original>
    <variation>Q</variation>
    <location>
        <position position="848"/>
    </location>
</feature>
<feature type="strand" evidence="18">
    <location>
        <begin position="22"/>
        <end position="24"/>
    </location>
</feature>
<feature type="strand" evidence="18">
    <location>
        <begin position="27"/>
        <end position="32"/>
    </location>
</feature>
<feature type="strand" evidence="18">
    <location>
        <begin position="39"/>
        <end position="47"/>
    </location>
</feature>
<feature type="helix" evidence="18">
    <location>
        <begin position="48"/>
        <end position="54"/>
    </location>
</feature>
<feature type="helix" evidence="18">
    <location>
        <begin position="66"/>
        <end position="69"/>
    </location>
</feature>
<feature type="helix" evidence="18">
    <location>
        <begin position="71"/>
        <end position="75"/>
    </location>
</feature>
<feature type="strand" evidence="18">
    <location>
        <begin position="79"/>
        <end position="85"/>
    </location>
</feature>
<feature type="helix" evidence="18">
    <location>
        <begin position="90"/>
        <end position="92"/>
    </location>
</feature>
<feature type="strand" evidence="18">
    <location>
        <begin position="94"/>
        <end position="101"/>
    </location>
</feature>
<feature type="strand" evidence="18">
    <location>
        <begin position="104"/>
        <end position="111"/>
    </location>
</feature>
<feature type="strand" evidence="18">
    <location>
        <begin position="114"/>
        <end position="121"/>
    </location>
</feature>
<feature type="strand" evidence="18">
    <location>
        <begin position="126"/>
        <end position="129"/>
    </location>
</feature>
<feature type="turn" evidence="18">
    <location>
        <begin position="131"/>
        <end position="133"/>
    </location>
</feature>
<feature type="strand" evidence="18">
    <location>
        <begin position="136"/>
        <end position="144"/>
    </location>
</feature>
<feature type="helix" evidence="18">
    <location>
        <begin position="147"/>
        <end position="157"/>
    </location>
</feature>
<feature type="helix" evidence="18">
    <location>
        <begin position="170"/>
        <end position="172"/>
    </location>
</feature>
<feature type="helix" evidence="18">
    <location>
        <begin position="178"/>
        <end position="180"/>
    </location>
</feature>
<feature type="strand" evidence="18">
    <location>
        <begin position="181"/>
        <end position="183"/>
    </location>
</feature>
<feature type="turn" evidence="18">
    <location>
        <begin position="185"/>
        <end position="187"/>
    </location>
</feature>
<feature type="strand" evidence="18">
    <location>
        <begin position="188"/>
        <end position="190"/>
    </location>
</feature>
<feature type="strand" evidence="18">
    <location>
        <begin position="193"/>
        <end position="195"/>
    </location>
</feature>
<feature type="strand" evidence="18">
    <location>
        <begin position="205"/>
        <end position="225"/>
    </location>
</feature>
<feature type="turn" evidence="18">
    <location>
        <begin position="226"/>
        <end position="229"/>
    </location>
</feature>
<feature type="strand" evidence="18">
    <location>
        <begin position="230"/>
        <end position="245"/>
    </location>
</feature>
<feature type="strand" evidence="18">
    <location>
        <begin position="247"/>
        <end position="255"/>
    </location>
</feature>
<feature type="helix" evidence="18">
    <location>
        <begin position="256"/>
        <end position="258"/>
    </location>
</feature>
<feature type="strand" evidence="18">
    <location>
        <begin position="260"/>
        <end position="269"/>
    </location>
</feature>
<feature type="strand" evidence="18">
    <location>
        <begin position="274"/>
        <end position="280"/>
    </location>
</feature>
<feature type="strand" evidence="18">
    <location>
        <begin position="301"/>
        <end position="309"/>
    </location>
</feature>
<feature type="turn" evidence="19">
    <location>
        <begin position="310"/>
        <end position="312"/>
    </location>
</feature>
<feature type="strand" evidence="18">
    <location>
        <begin position="314"/>
        <end position="321"/>
    </location>
</feature>
<feature type="strand" evidence="18">
    <location>
        <begin position="326"/>
        <end position="329"/>
    </location>
</feature>
<feature type="strand" evidence="18">
    <location>
        <begin position="342"/>
        <end position="345"/>
    </location>
</feature>
<feature type="strand" evidence="18">
    <location>
        <begin position="348"/>
        <end position="350"/>
    </location>
</feature>
<feature type="strand" evidence="18">
    <location>
        <begin position="352"/>
        <end position="357"/>
    </location>
</feature>
<feature type="strand" evidence="19">
    <location>
        <begin position="360"/>
        <end position="363"/>
    </location>
</feature>
<feature type="helix" evidence="18">
    <location>
        <begin position="364"/>
        <end position="366"/>
    </location>
</feature>
<feature type="helix" evidence="18">
    <location>
        <begin position="369"/>
        <end position="381"/>
    </location>
</feature>
<feature type="strand" evidence="18">
    <location>
        <begin position="386"/>
        <end position="389"/>
    </location>
</feature>
<feature type="helix" evidence="18">
    <location>
        <begin position="398"/>
        <end position="407"/>
    </location>
</feature>
<feature type="strand" evidence="18">
    <location>
        <begin position="410"/>
        <end position="414"/>
    </location>
</feature>
<feature type="strand" evidence="18">
    <location>
        <begin position="418"/>
        <end position="420"/>
    </location>
</feature>
<feature type="helix" evidence="18">
    <location>
        <begin position="426"/>
        <end position="443"/>
    </location>
</feature>
<feature type="strand" evidence="18">
    <location>
        <begin position="449"/>
        <end position="453"/>
    </location>
</feature>
<feature type="helix" evidence="18">
    <location>
        <begin position="458"/>
        <end position="464"/>
    </location>
</feature>
<feature type="turn" evidence="18">
    <location>
        <begin position="465"/>
        <end position="467"/>
    </location>
</feature>
<feature type="turn" evidence="18">
    <location>
        <begin position="471"/>
        <end position="473"/>
    </location>
</feature>
<feature type="helix" evidence="18">
    <location>
        <begin position="474"/>
        <end position="485"/>
    </location>
</feature>
<feature type="turn" evidence="18">
    <location>
        <begin position="486"/>
        <end position="488"/>
    </location>
</feature>
<feature type="helix" evidence="18">
    <location>
        <begin position="489"/>
        <end position="496"/>
    </location>
</feature>
<feature type="strand" evidence="18">
    <location>
        <begin position="502"/>
        <end position="507"/>
    </location>
</feature>
<feature type="helix" evidence="18">
    <location>
        <begin position="511"/>
        <end position="515"/>
    </location>
</feature>
<feature type="turn" evidence="19">
    <location>
        <begin position="516"/>
        <end position="518"/>
    </location>
</feature>
<feature type="strand" evidence="18">
    <location>
        <begin position="531"/>
        <end position="533"/>
    </location>
</feature>
<feature type="strand" evidence="18">
    <location>
        <begin position="536"/>
        <end position="538"/>
    </location>
</feature>
<feature type="helix" evidence="18">
    <location>
        <begin position="543"/>
        <end position="545"/>
    </location>
</feature>
<feature type="strand" evidence="18">
    <location>
        <begin position="552"/>
        <end position="555"/>
    </location>
</feature>
<feature type="helix" evidence="18">
    <location>
        <begin position="563"/>
        <end position="567"/>
    </location>
</feature>
<feature type="helix" evidence="18">
    <location>
        <begin position="572"/>
        <end position="574"/>
    </location>
</feature>
<feature type="helix" evidence="18">
    <location>
        <begin position="580"/>
        <end position="585"/>
    </location>
</feature>
<feature type="helix" evidence="18">
    <location>
        <begin position="591"/>
        <end position="600"/>
    </location>
</feature>
<feature type="helix" evidence="18">
    <location>
        <begin position="611"/>
        <end position="639"/>
    </location>
</feature>
<feature type="strand" evidence="18">
    <location>
        <begin position="653"/>
        <end position="657"/>
    </location>
</feature>
<feature type="strand" evidence="18">
    <location>
        <begin position="662"/>
        <end position="665"/>
    </location>
</feature>
<feature type="helix" evidence="18">
    <location>
        <begin position="679"/>
        <end position="687"/>
    </location>
</feature>
<feature type="strand" evidence="18">
    <location>
        <begin position="689"/>
        <end position="698"/>
    </location>
</feature>
<feature type="strand" evidence="18">
    <location>
        <begin position="701"/>
        <end position="708"/>
    </location>
</feature>
<feature type="strand" evidence="18">
    <location>
        <begin position="714"/>
        <end position="724"/>
    </location>
</feature>
<feature type="strand" evidence="18">
    <location>
        <begin position="734"/>
        <end position="741"/>
    </location>
</feature>
<feature type="strand" evidence="18">
    <location>
        <begin position="746"/>
        <end position="753"/>
    </location>
</feature>
<feature type="helix" evidence="18">
    <location>
        <begin position="754"/>
        <end position="759"/>
    </location>
</feature>
<feature type="turn" evidence="18">
    <location>
        <begin position="766"/>
        <end position="768"/>
    </location>
</feature>
<feature type="strand" evidence="18">
    <location>
        <begin position="769"/>
        <end position="774"/>
    </location>
</feature>
<feature type="strand" evidence="18">
    <location>
        <begin position="779"/>
        <end position="781"/>
    </location>
</feature>
<feature type="strand" evidence="18">
    <location>
        <begin position="786"/>
        <end position="791"/>
    </location>
</feature>
<feature type="helix" evidence="18">
    <location>
        <begin position="793"/>
        <end position="795"/>
    </location>
</feature>
<feature type="strand" evidence="18">
    <location>
        <begin position="805"/>
        <end position="811"/>
    </location>
</feature>
<feature type="strand" evidence="18">
    <location>
        <begin position="814"/>
        <end position="820"/>
    </location>
</feature>
<feature type="strand" evidence="18">
    <location>
        <begin position="825"/>
        <end position="831"/>
    </location>
</feature>
<feature type="strand" evidence="18">
    <location>
        <begin position="835"/>
        <end position="841"/>
    </location>
</feature>
<feature type="strand" evidence="18">
    <location>
        <begin position="843"/>
        <end position="846"/>
    </location>
</feature>
<feature type="strand" evidence="18">
    <location>
        <begin position="848"/>
        <end position="859"/>
    </location>
</feature>
<feature type="helix" evidence="18">
    <location>
        <begin position="863"/>
        <end position="869"/>
    </location>
</feature>
<feature type="strand" evidence="18">
    <location>
        <begin position="871"/>
        <end position="873"/>
    </location>
</feature>
<feature type="helix" evidence="18">
    <location>
        <begin position="875"/>
        <end position="878"/>
    </location>
</feature>
<gene>
    <name evidence="15" type="primary">Manba</name>
    <name evidence="5" type="synonym">Bmn</name>
</gene>
<proteinExistence type="evidence at protein level"/>
<organism>
    <name type="scientific">Mus musculus</name>
    <name type="common">Mouse</name>
    <dbReference type="NCBI Taxonomy" id="10090"/>
    <lineage>
        <taxon>Eukaryota</taxon>
        <taxon>Metazoa</taxon>
        <taxon>Chordata</taxon>
        <taxon>Craniata</taxon>
        <taxon>Vertebrata</taxon>
        <taxon>Euteleostomi</taxon>
        <taxon>Mammalia</taxon>
        <taxon>Eutheria</taxon>
        <taxon>Euarchontoglires</taxon>
        <taxon>Glires</taxon>
        <taxon>Rodentia</taxon>
        <taxon>Myomorpha</taxon>
        <taxon>Muroidea</taxon>
        <taxon>Muridae</taxon>
        <taxon>Murinae</taxon>
        <taxon>Mus</taxon>
        <taxon>Mus</taxon>
    </lineage>
</organism>
<keyword id="KW-0002">3D-structure</keyword>
<keyword id="KW-1015">Disulfide bond</keyword>
<keyword id="KW-0325">Glycoprotein</keyword>
<keyword id="KW-0326">Glycosidase</keyword>
<keyword id="KW-0378">Hydrolase</keyword>
<keyword id="KW-0458">Lysosome</keyword>
<keyword id="KW-1185">Reference proteome</keyword>
<keyword id="KW-0732">Signal</keyword>
<sequence length="879" mass="100831">MHLHLLLILALFRAGCVVAGPSYSLSGSWRVSNGNGSLELPATVPGYVHSALHQHGLIQDPYYRFNDLNYRWISLDNWTYSTEFKIPFNLSEWQKVKLIFDGVDTVAEILFNNVTIGKTDNMFTGYSFDITNVVKDVNSLKLQFRSAVQYAECQSKAHTSYRVPPECPPVEQKGECHVNFIRKAQCSFSWDWGPSFPSQGIWKDVRIEAYNIAHLDYLTFLPVYDNASQAWNIEIKASFDVASSKSVGGQVTVAIPQLKTQQTNDIELQQEQRIVKLLVKIRKDVAVETWWPRGHGNQTGYNMTILFALDGGLKIEKAAKVYFRTVQLIEEGIKGSPGLSFYFKINGLPIFLKGSNWIPADSFQDKVTSDRLQLLFQSVVDANMNTLRVWGGGIYEQDEFYALCDELGIMVWQDFMFASALYPTEPGFLASVRKEVTYQVRRLKSHPSIIIWSGNNENEVALSVNWFHVNPRDMKTYIDDYVTLYVKNIRKIVLSEDKSRPFIASSPTNGMKTMEEGWISYDPYSIQYGDIHFYNYADDCWNWKIFPKARLVSEYGYQSWPSFSTLEKVSSQEDWAYNSRFSLHRQHHEDGNHQMLHQVKMHFKLPQGTDPLRTFKDTIYLTQVMQAQCIKTETEFYLRSRSEIVDGKGHTMGALYWQLNDIWQAPSWASLEYGGKWKMLHYFARRFFAPLLPVGFEDEGVFYVYGVSDLHKDHHTQLTVRLHHWSSPKPLCSLVNSSIVVKAGEAVVLFQMPVSELLKRCRGCTRETCVVSFYFSTDKELFSPTNYHFLSSLKDAKGLLEANITVNISQKGNVFVFDLETSAVAPFVWLDVGSIPGRFSDNGFLMIRKKLSVLFYPWKPTSKSELQQAFSVTSLTDTY</sequence>
<dbReference type="EC" id="3.2.1.25" evidence="3 8"/>
<dbReference type="EMBL" id="AF306557">
    <property type="protein sequence ID" value="AAK18177.1"/>
    <property type="molecule type" value="mRNA"/>
</dbReference>
<dbReference type="EMBL" id="AK010623">
    <property type="protein sequence ID" value="BAB27069.1"/>
    <property type="molecule type" value="mRNA"/>
</dbReference>
<dbReference type="EMBL" id="AK142165">
    <property type="protein sequence ID" value="BAE24954.1"/>
    <property type="molecule type" value="mRNA"/>
</dbReference>
<dbReference type="EMBL" id="AK166340">
    <property type="protein sequence ID" value="BAE38715.1"/>
    <property type="molecule type" value="mRNA"/>
</dbReference>
<dbReference type="EMBL" id="AK170290">
    <property type="protein sequence ID" value="BAE41690.1"/>
    <property type="molecule type" value="mRNA"/>
</dbReference>
<dbReference type="EMBL" id="BC031409">
    <property type="protein sequence ID" value="AAH31409.1"/>
    <property type="molecule type" value="mRNA"/>
</dbReference>
<dbReference type="CCDS" id="CCDS17857.1"/>
<dbReference type="RefSeq" id="NP_081564.3">
    <property type="nucleotide sequence ID" value="NM_027288.3"/>
</dbReference>
<dbReference type="PDB" id="6DDT">
    <property type="method" value="X-ray"/>
    <property type="resolution" value="2.10 A"/>
    <property type="chains" value="A=22-879"/>
</dbReference>
<dbReference type="PDB" id="6DDU">
    <property type="method" value="X-ray"/>
    <property type="resolution" value="2.67 A"/>
    <property type="chains" value="A=22-879"/>
</dbReference>
<dbReference type="PDBsum" id="6DDT"/>
<dbReference type="PDBsum" id="6DDU"/>
<dbReference type="SMR" id="Q8K2I4"/>
<dbReference type="BioGRID" id="225356">
    <property type="interactions" value="3"/>
</dbReference>
<dbReference type="FunCoup" id="Q8K2I4">
    <property type="interactions" value="828"/>
</dbReference>
<dbReference type="STRING" id="10090.ENSMUSP00000029814"/>
<dbReference type="CAZy" id="GH2">
    <property type="family name" value="Glycoside Hydrolase Family 2"/>
</dbReference>
<dbReference type="GlyConnect" id="2153">
    <property type="glycosylation" value="1 N-Linked glycan (1 site)"/>
</dbReference>
<dbReference type="GlyCosmos" id="Q8K2I4">
    <property type="glycosylation" value="10 sites, 1 glycan"/>
</dbReference>
<dbReference type="GlyGen" id="Q8K2I4">
    <property type="glycosylation" value="10 sites, 7 N-linked glycans (8 sites)"/>
</dbReference>
<dbReference type="iPTMnet" id="Q8K2I4"/>
<dbReference type="PhosphoSitePlus" id="Q8K2I4"/>
<dbReference type="jPOST" id="Q8K2I4"/>
<dbReference type="PaxDb" id="10090-ENSMUSP00000029814"/>
<dbReference type="PeptideAtlas" id="Q8K2I4"/>
<dbReference type="ProteomicsDB" id="295811"/>
<dbReference type="DNASU" id="110173"/>
<dbReference type="GeneID" id="110173"/>
<dbReference type="KEGG" id="mmu:110173"/>
<dbReference type="UCSC" id="uc008rlu.2">
    <property type="organism name" value="mouse"/>
</dbReference>
<dbReference type="AGR" id="MGI:88175"/>
<dbReference type="CTD" id="4126"/>
<dbReference type="MGI" id="MGI:88175">
    <property type="gene designation" value="Manba"/>
</dbReference>
<dbReference type="eggNOG" id="KOG2230">
    <property type="taxonomic scope" value="Eukaryota"/>
</dbReference>
<dbReference type="InParanoid" id="Q8K2I4"/>
<dbReference type="OrthoDB" id="2866996at2759"/>
<dbReference type="PhylomeDB" id="Q8K2I4"/>
<dbReference type="TreeFam" id="TF105723"/>
<dbReference type="Reactome" id="R-MMU-6798695">
    <property type="pathway name" value="Neutrophil degranulation"/>
</dbReference>
<dbReference type="Reactome" id="R-MMU-8853383">
    <property type="pathway name" value="Lysosomal oligosaccharide catabolism"/>
</dbReference>
<dbReference type="UniPathway" id="UPA00280"/>
<dbReference type="BioGRID-ORCS" id="110173">
    <property type="hits" value="2 hits in 78 CRISPR screens"/>
</dbReference>
<dbReference type="ChiTaRS" id="Manba">
    <property type="organism name" value="mouse"/>
</dbReference>
<dbReference type="PRO" id="PR:Q8K2I4"/>
<dbReference type="Proteomes" id="UP000000589">
    <property type="component" value="Unplaced"/>
</dbReference>
<dbReference type="RNAct" id="Q8K2I4">
    <property type="molecule type" value="protein"/>
</dbReference>
<dbReference type="GO" id="GO:0005615">
    <property type="term" value="C:extracellular space"/>
    <property type="evidence" value="ECO:0000314"/>
    <property type="project" value="MGI"/>
</dbReference>
<dbReference type="GO" id="GO:0043202">
    <property type="term" value="C:lysosomal lumen"/>
    <property type="evidence" value="ECO:0000314"/>
    <property type="project" value="MGI"/>
</dbReference>
<dbReference type="GO" id="GO:0005764">
    <property type="term" value="C:lysosome"/>
    <property type="evidence" value="ECO:0000304"/>
    <property type="project" value="MGI"/>
</dbReference>
<dbReference type="GO" id="GO:0004567">
    <property type="term" value="F:beta-mannosidase activity"/>
    <property type="evidence" value="ECO:0000314"/>
    <property type="project" value="UniProtKB"/>
</dbReference>
<dbReference type="GO" id="GO:0016787">
    <property type="term" value="F:hydrolase activity"/>
    <property type="evidence" value="ECO:0000314"/>
    <property type="project" value="MGI"/>
</dbReference>
<dbReference type="GO" id="GO:0006516">
    <property type="term" value="P:glycoprotein catabolic process"/>
    <property type="evidence" value="ECO:0000314"/>
    <property type="project" value="UniProtKB"/>
</dbReference>
<dbReference type="GO" id="GO:0009313">
    <property type="term" value="P:oligosaccharide catabolic process"/>
    <property type="evidence" value="ECO:0000314"/>
    <property type="project" value="MGI"/>
</dbReference>
<dbReference type="FunFam" id="2.60.40.10:FF:000650">
    <property type="entry name" value="Mannosidase beta"/>
    <property type="match status" value="1"/>
</dbReference>
<dbReference type="FunFam" id="2.60.40.10:FF:000781">
    <property type="entry name" value="Mannosidase beta"/>
    <property type="match status" value="1"/>
</dbReference>
<dbReference type="FunFam" id="3.20.20.80:FF:000035">
    <property type="entry name" value="Mannosidase beta"/>
    <property type="match status" value="1"/>
</dbReference>
<dbReference type="FunFam" id="2.60.120.260:FF:000060">
    <property type="entry name" value="Probable beta-mannosidase"/>
    <property type="match status" value="1"/>
</dbReference>
<dbReference type="Gene3D" id="2.60.120.260">
    <property type="entry name" value="Galactose-binding domain-like"/>
    <property type="match status" value="1"/>
</dbReference>
<dbReference type="Gene3D" id="3.20.20.80">
    <property type="entry name" value="Glycosidases"/>
    <property type="match status" value="1"/>
</dbReference>
<dbReference type="Gene3D" id="2.60.40.10">
    <property type="entry name" value="Immunoglobulins"/>
    <property type="match status" value="2"/>
</dbReference>
<dbReference type="InterPro" id="IPR036156">
    <property type="entry name" value="Beta-gal/glucu_dom_sf"/>
</dbReference>
<dbReference type="InterPro" id="IPR054593">
    <property type="entry name" value="Beta-mannosidase-like_N2"/>
</dbReference>
<dbReference type="InterPro" id="IPR050887">
    <property type="entry name" value="Beta-mannosidase_GH2"/>
</dbReference>
<dbReference type="InterPro" id="IPR041625">
    <property type="entry name" value="Beta-mannosidase_Ig"/>
</dbReference>
<dbReference type="InterPro" id="IPR008979">
    <property type="entry name" value="Galactose-bd-like_sf"/>
</dbReference>
<dbReference type="InterPro" id="IPR006103">
    <property type="entry name" value="Glyco_hydro_2_cat"/>
</dbReference>
<dbReference type="InterPro" id="IPR017853">
    <property type="entry name" value="Glycoside_hydrolase_SF"/>
</dbReference>
<dbReference type="InterPro" id="IPR013783">
    <property type="entry name" value="Ig-like_fold"/>
</dbReference>
<dbReference type="InterPro" id="IPR041447">
    <property type="entry name" value="Mannosidase_ig"/>
</dbReference>
<dbReference type="PANTHER" id="PTHR43730">
    <property type="entry name" value="BETA-MANNOSIDASE"/>
    <property type="match status" value="1"/>
</dbReference>
<dbReference type="PANTHER" id="PTHR43730:SF1">
    <property type="entry name" value="BETA-MANNOSIDASE"/>
    <property type="match status" value="1"/>
</dbReference>
<dbReference type="Pfam" id="PF02836">
    <property type="entry name" value="Glyco_hydro_2_C"/>
    <property type="match status" value="1"/>
</dbReference>
<dbReference type="Pfam" id="PF22666">
    <property type="entry name" value="Glyco_hydro_2_N2"/>
    <property type="match status" value="1"/>
</dbReference>
<dbReference type="Pfam" id="PF17753">
    <property type="entry name" value="Ig_mannosidase"/>
    <property type="match status" value="1"/>
</dbReference>
<dbReference type="Pfam" id="PF17786">
    <property type="entry name" value="Mannosidase_ig"/>
    <property type="match status" value="1"/>
</dbReference>
<dbReference type="SUPFAM" id="SSF51445">
    <property type="entry name" value="(Trans)glycosidases"/>
    <property type="match status" value="1"/>
</dbReference>
<dbReference type="SUPFAM" id="SSF49303">
    <property type="entry name" value="beta-Galactosidase/glucuronidase domain"/>
    <property type="match status" value="3"/>
</dbReference>
<dbReference type="SUPFAM" id="SSF49785">
    <property type="entry name" value="Galactose-binding domain-like"/>
    <property type="match status" value="1"/>
</dbReference>
<comment type="function">
    <text evidence="3">Exoglycosidase that cleaves the single beta-linked mannose residue from the non-reducing end of all N-linked glycoprotein oligosaccharides.</text>
</comment>
<comment type="catalytic activity">
    <reaction evidence="3 8">
        <text>Hydrolysis of terminal, non-reducing beta-D-mannose residues in beta-D-mannosides.</text>
        <dbReference type="EC" id="3.2.1.25"/>
    </reaction>
</comment>
<comment type="biophysicochemical properties">
    <phDependence>
        <text evidence="4">Optimum pH is 4.5.</text>
    </phDependence>
</comment>
<comment type="pathway">
    <text evidence="3">Glycan metabolism; N-glycan degradation.</text>
</comment>
<comment type="subunit">
    <text evidence="4">Monomer.</text>
</comment>
<comment type="subcellular location">
    <subcellularLocation>
        <location evidence="7">Lysosome</location>
    </subcellularLocation>
</comment>
<comment type="tissue specificity">
    <text evidence="2 3">Highest level in liver, high levels in lung, testis, skin and spleen, moderate level in thymus. Activity found in plasma, kidney, liver, spleen, pancreas, brain, testis, epididymis, heart, lung and skeletal muscle.</text>
</comment>
<comment type="disruption phenotype">
    <text evidence="3">Mice are born at the expected Mendelian rate and display no visible phenotype for at least one year. However, they display vacuolation in the central nervous system and accumulation of disaccharides in brain and epididymis, detectable already at four weeks after birth.</text>
</comment>
<comment type="similarity">
    <text evidence="1">Belongs to the glycosyl hydrolase 2 family.</text>
</comment>
<name>MANBA_MOUSE</name>
<accession>Q8K2I4</accession>
<accession>Q3TDB3</accession>
<accession>Q3TLS7</accession>
<accession>Q3UQT5</accession>
<accession>Q99MS1</accession>
<accession>Q9CRH3</accession>